<comment type="function">
    <text evidence="1">Bifunctional enzyme that catalyzes the epimerization of the S- and R-forms of NAD(P)HX and the dehydration of the S-form of NAD(P)HX at the expense of ADP, which is converted to AMP. This allows the repair of both epimers of NAD(P)HX, a damaged form of NAD(P)H that is a result of enzymatic or heat-dependent hydration (By similarity).</text>
</comment>
<comment type="catalytic activity">
    <reaction>
        <text>(6S)-NADHX + ADP = AMP + phosphate + NADH + H(+)</text>
        <dbReference type="Rhea" id="RHEA:32223"/>
        <dbReference type="ChEBI" id="CHEBI:15378"/>
        <dbReference type="ChEBI" id="CHEBI:43474"/>
        <dbReference type="ChEBI" id="CHEBI:57945"/>
        <dbReference type="ChEBI" id="CHEBI:64074"/>
        <dbReference type="ChEBI" id="CHEBI:456215"/>
        <dbReference type="ChEBI" id="CHEBI:456216"/>
        <dbReference type="EC" id="4.2.1.136"/>
    </reaction>
</comment>
<comment type="catalytic activity">
    <reaction>
        <text>(6S)-NADPHX + ADP = AMP + phosphate + NADPH + H(+)</text>
        <dbReference type="Rhea" id="RHEA:32235"/>
        <dbReference type="ChEBI" id="CHEBI:15378"/>
        <dbReference type="ChEBI" id="CHEBI:43474"/>
        <dbReference type="ChEBI" id="CHEBI:57783"/>
        <dbReference type="ChEBI" id="CHEBI:64076"/>
        <dbReference type="ChEBI" id="CHEBI:456215"/>
        <dbReference type="ChEBI" id="CHEBI:456216"/>
        <dbReference type="EC" id="4.2.1.136"/>
    </reaction>
</comment>
<comment type="catalytic activity">
    <reaction>
        <text>(6R)-NADHX = (6S)-NADHX</text>
        <dbReference type="Rhea" id="RHEA:32215"/>
        <dbReference type="ChEBI" id="CHEBI:64074"/>
        <dbReference type="ChEBI" id="CHEBI:64075"/>
        <dbReference type="EC" id="5.1.99.6"/>
    </reaction>
</comment>
<comment type="catalytic activity">
    <reaction>
        <text>(6R)-NADPHX = (6S)-NADPHX</text>
        <dbReference type="Rhea" id="RHEA:32227"/>
        <dbReference type="ChEBI" id="CHEBI:64076"/>
        <dbReference type="ChEBI" id="CHEBI:64077"/>
        <dbReference type="EC" id="5.1.99.6"/>
    </reaction>
</comment>
<comment type="cofactor">
    <cofactor evidence="1">
        <name>K(+)</name>
        <dbReference type="ChEBI" id="CHEBI:29103"/>
    </cofactor>
    <text evidence="1">Binds 1 potassium ion per subunit.</text>
</comment>
<comment type="similarity">
    <text evidence="2">In the N-terminal section; belongs to the NnrE/AIBP family.</text>
</comment>
<comment type="similarity">
    <text evidence="2">In the C-terminal section; belongs to the NnrD/CARKD family.</text>
</comment>
<reference key="1">
    <citation type="journal article" date="2016" name="Front. Microbiol.">
        <title>The complete genome sequence of hyperthermophile Dictyoglomus turgidum DSM 6724 reveals a specialized carbohydrate fermentor.</title>
        <authorList>
            <person name="Brumm P.J."/>
            <person name="Gowda K."/>
            <person name="Robb F.T."/>
            <person name="Mead D.A."/>
        </authorList>
    </citation>
    <scope>NUCLEOTIDE SEQUENCE [LARGE SCALE GENOMIC DNA]</scope>
    <source>
        <strain>DSM 6724 / Z-1310</strain>
    </source>
</reference>
<protein>
    <recommendedName>
        <fullName>Bifunctional NAD(P)H-hydrate repair enzyme Nnr</fullName>
    </recommendedName>
    <alternativeName>
        <fullName>Nicotinamide nucleotide repair protein</fullName>
    </alternativeName>
    <domain>
        <recommendedName>
            <fullName>ADP-dependent (S)-NAD(P)H-hydrate dehydratase</fullName>
            <ecNumber>4.2.1.136</ecNumber>
        </recommendedName>
        <alternativeName>
            <fullName>ADP-dependent NAD(P)HX dehydratase</fullName>
        </alternativeName>
    </domain>
    <domain>
        <recommendedName>
            <fullName>NAD(P)H-hydrate epimerase</fullName>
            <ecNumber>5.1.99.6</ecNumber>
        </recommendedName>
        <alternativeName>
            <fullName>NAD(P)HX epimerase</fullName>
        </alternativeName>
    </domain>
</protein>
<keyword id="KW-0067">ATP-binding</keyword>
<keyword id="KW-0413">Isomerase</keyword>
<keyword id="KW-0456">Lyase</keyword>
<keyword id="KW-0479">Metal-binding</keyword>
<keyword id="KW-0511">Multifunctional enzyme</keyword>
<keyword id="KW-0520">NAD</keyword>
<keyword id="KW-0521">NADP</keyword>
<keyword id="KW-0547">Nucleotide-binding</keyword>
<keyword id="KW-0630">Potassium</keyword>
<keyword id="KW-1185">Reference proteome</keyword>
<sequence>MKLVTSEEIKRLEERLEREYSIPPILLMENAASFLFSFLKEKFEDIENRKIAILCGPGNNGGDGVALARYLYSNGIRKITIFSYLWGKKISDLLKIQLGLLKNLVEIKDILQDYTELKEYELIVDGIFGIGLKREIDDDLKKIFRYINNLGKKIISIDIPSGINSDTGEIMGEALRADYVLTMFLPKVGLFETGAVDYVGEVIVGRLGIPIEIVNDIVESNIHLVDWELLKDIVRIPSKGVHKGKKGKVLIIGGSFRYTGAPILSALSALRTGAGMVYLAVPEKISMVYRGNYPEIIYIPLKDKDGYISYDNLGYILEIIETYGIEAVAIGPGIGINEDVRRLVQDFLRKVDKKVVVDADALSFVKDILGDISGKDVVFTPHYGEMSRIVEESVETISKKRVEIGRNFVERYKLNLIIKGPNSLFFDPKNHVYVNPFADFLLATAGSGDVLTGIIAGFSAQGYSLKEACILGNFVHGYSSVIWKKYKGSVGLTASDIIKILPLAIDEVIRRRNV</sequence>
<feature type="chain" id="PRO_0000416417" description="Bifunctional NAD(P)H-hydrate repair enzyme Nnr">
    <location>
        <begin position="1"/>
        <end position="514"/>
    </location>
</feature>
<feature type="domain" description="YjeF N-terminal">
    <location>
        <begin position="9"/>
        <end position="215"/>
    </location>
</feature>
<feature type="domain" description="YjeF C-terminal">
    <location>
        <begin position="226"/>
        <end position="508"/>
    </location>
</feature>
<feature type="region of interest" description="NAD(P)H-hydrate epimerase" evidence="1">
    <location>
        <begin position="1"/>
        <end position="218"/>
    </location>
</feature>
<feature type="region of interest" description="NADPHX 1; for epimerase activity" evidence="1">
    <location>
        <begin position="59"/>
        <end position="63"/>
    </location>
</feature>
<feature type="region of interest" description="NADPHX 1; for epimerase activity" evidence="1">
    <location>
        <begin position="129"/>
        <end position="135"/>
    </location>
</feature>
<feature type="region of interest" description="ADP-dependent (S)-NAD(P)H-hydrate dehydratase" evidence="1">
    <location>
        <begin position="226"/>
        <end position="514"/>
    </location>
</feature>
<feature type="region of interest" description="NADPHX 2; for dehydratase activity" evidence="1">
    <location>
        <begin position="382"/>
        <end position="388"/>
    </location>
</feature>
<feature type="binding site" evidence="1">
    <location>
        <position position="60"/>
    </location>
    <ligand>
        <name>K(+)</name>
        <dbReference type="ChEBI" id="CHEBI:29103"/>
    </ligand>
</feature>
<feature type="binding site" evidence="1">
    <location>
        <position position="125"/>
    </location>
    <ligand>
        <name>K(+)</name>
        <dbReference type="ChEBI" id="CHEBI:29103"/>
    </ligand>
</feature>
<feature type="binding site" evidence="1">
    <location>
        <position position="158"/>
    </location>
    <ligand>
        <name>(6S)-NADPHX</name>
        <dbReference type="ChEBI" id="CHEBI:64076"/>
        <label>1</label>
        <note>for epimerase activity</note>
    </ligand>
</feature>
<feature type="binding site" evidence="1">
    <location>
        <position position="161"/>
    </location>
    <ligand>
        <name>K(+)</name>
        <dbReference type="ChEBI" id="CHEBI:29103"/>
    </ligand>
</feature>
<feature type="binding site" evidence="1">
    <location>
        <position position="333"/>
    </location>
    <ligand>
        <name>(6S)-NADPHX</name>
        <dbReference type="ChEBI" id="CHEBI:64076"/>
        <label>2</label>
        <note>for dehydratase activity</note>
    </ligand>
</feature>
<feature type="binding site" evidence="1">
    <location>
        <begin position="419"/>
        <end position="423"/>
    </location>
    <ligand>
        <name>ADP</name>
        <dbReference type="ChEBI" id="CHEBI:456216"/>
    </ligand>
</feature>
<feature type="binding site" evidence="1">
    <location>
        <begin position="439"/>
        <end position="448"/>
    </location>
    <ligand>
        <name>ADP</name>
        <dbReference type="ChEBI" id="CHEBI:456216"/>
    </ligand>
</feature>
<feature type="binding site" evidence="1">
    <location>
        <position position="449"/>
    </location>
    <ligand>
        <name>(6S)-NADPHX</name>
        <dbReference type="ChEBI" id="CHEBI:64076"/>
        <label>2</label>
        <note>for dehydratase activity</note>
    </ligand>
</feature>
<name>NNR_DICTD</name>
<proteinExistence type="inferred from homology"/>
<accession>B8E2P6</accession>
<organism>
    <name type="scientific">Dictyoglomus turgidum (strain DSM 6724 / Z-1310)</name>
    <dbReference type="NCBI Taxonomy" id="515635"/>
    <lineage>
        <taxon>Bacteria</taxon>
        <taxon>Pseudomonadati</taxon>
        <taxon>Dictyoglomota</taxon>
        <taxon>Dictyoglomia</taxon>
        <taxon>Dictyoglomales</taxon>
        <taxon>Dictyoglomaceae</taxon>
        <taxon>Dictyoglomus</taxon>
    </lineage>
</organism>
<evidence type="ECO:0000250" key="1"/>
<evidence type="ECO:0000305" key="2"/>
<gene>
    <name type="primary">nnr</name>
    <name type="ordered locus">Dtur_1617</name>
</gene>
<dbReference type="EC" id="4.2.1.136"/>
<dbReference type="EC" id="5.1.99.6"/>
<dbReference type="EMBL" id="CP001251">
    <property type="protein sequence ID" value="ACK42890.1"/>
    <property type="molecule type" value="Genomic_DNA"/>
</dbReference>
<dbReference type="RefSeq" id="WP_012583965.1">
    <property type="nucleotide sequence ID" value="NC_011661.1"/>
</dbReference>
<dbReference type="RefSeq" id="YP_002353504.1">
    <property type="nucleotide sequence ID" value="NC_011661.1"/>
</dbReference>
<dbReference type="SMR" id="B8E2P6"/>
<dbReference type="FunCoup" id="B8E2P6">
    <property type="interactions" value="102"/>
</dbReference>
<dbReference type="STRING" id="515635.Dtur_1617"/>
<dbReference type="EnsemblBacteria" id="ACK42890">
    <property type="protein sequence ID" value="ACK42890"/>
    <property type="gene ID" value="Dtur_1617"/>
</dbReference>
<dbReference type="KEGG" id="dtu:Dtur_1617"/>
<dbReference type="PATRIC" id="fig|515635.4.peg.1666"/>
<dbReference type="eggNOG" id="COG0062">
    <property type="taxonomic scope" value="Bacteria"/>
</dbReference>
<dbReference type="eggNOG" id="COG0063">
    <property type="taxonomic scope" value="Bacteria"/>
</dbReference>
<dbReference type="HOGENOM" id="CLU_024853_4_1_0"/>
<dbReference type="InParanoid" id="B8E2P6"/>
<dbReference type="OrthoDB" id="9806925at2"/>
<dbReference type="Proteomes" id="UP000007719">
    <property type="component" value="Chromosome"/>
</dbReference>
<dbReference type="GO" id="GO:0052855">
    <property type="term" value="F:ADP-dependent NAD(P)H-hydrate dehydratase activity"/>
    <property type="evidence" value="ECO:0000318"/>
    <property type="project" value="GO_Central"/>
</dbReference>
<dbReference type="GO" id="GO:0005524">
    <property type="term" value="F:ATP binding"/>
    <property type="evidence" value="ECO:0007669"/>
    <property type="project" value="UniProtKB-KW"/>
</dbReference>
<dbReference type="GO" id="GO:0046872">
    <property type="term" value="F:metal ion binding"/>
    <property type="evidence" value="ECO:0007669"/>
    <property type="project" value="UniProtKB-KW"/>
</dbReference>
<dbReference type="GO" id="GO:0052856">
    <property type="term" value="F:NAD(P)HX epimerase activity"/>
    <property type="evidence" value="ECO:0000318"/>
    <property type="project" value="GO_Central"/>
</dbReference>
<dbReference type="GO" id="GO:0110051">
    <property type="term" value="P:metabolite repair"/>
    <property type="evidence" value="ECO:0000318"/>
    <property type="project" value="GO_Central"/>
</dbReference>
<dbReference type="GO" id="GO:0046496">
    <property type="term" value="P:nicotinamide nucleotide metabolic process"/>
    <property type="evidence" value="ECO:0007669"/>
    <property type="project" value="UniProtKB-UniRule"/>
</dbReference>
<dbReference type="CDD" id="cd01171">
    <property type="entry name" value="YXKO-related"/>
    <property type="match status" value="1"/>
</dbReference>
<dbReference type="Gene3D" id="3.40.1190.20">
    <property type="match status" value="1"/>
</dbReference>
<dbReference type="Gene3D" id="3.40.50.10260">
    <property type="entry name" value="YjeF N-terminal domain"/>
    <property type="match status" value="1"/>
</dbReference>
<dbReference type="HAMAP" id="MF_01965">
    <property type="entry name" value="NADHX_dehydratase"/>
    <property type="match status" value="1"/>
</dbReference>
<dbReference type="HAMAP" id="MF_01966">
    <property type="entry name" value="NADHX_epimerase"/>
    <property type="match status" value="1"/>
</dbReference>
<dbReference type="InterPro" id="IPR017953">
    <property type="entry name" value="Carbohydrate_kinase_pred_CS"/>
</dbReference>
<dbReference type="InterPro" id="IPR000631">
    <property type="entry name" value="CARKD"/>
</dbReference>
<dbReference type="InterPro" id="IPR030677">
    <property type="entry name" value="Nnr"/>
</dbReference>
<dbReference type="InterPro" id="IPR029056">
    <property type="entry name" value="Ribokinase-like"/>
</dbReference>
<dbReference type="InterPro" id="IPR004443">
    <property type="entry name" value="YjeF_N_dom"/>
</dbReference>
<dbReference type="InterPro" id="IPR036652">
    <property type="entry name" value="YjeF_N_dom_sf"/>
</dbReference>
<dbReference type="NCBIfam" id="TIGR00196">
    <property type="entry name" value="yjeF_cterm"/>
    <property type="match status" value="1"/>
</dbReference>
<dbReference type="NCBIfam" id="TIGR00197">
    <property type="entry name" value="yjeF_nterm"/>
    <property type="match status" value="1"/>
</dbReference>
<dbReference type="PANTHER" id="PTHR12592:SF0">
    <property type="entry name" value="ATP-DEPENDENT (S)-NAD(P)H-HYDRATE DEHYDRATASE"/>
    <property type="match status" value="1"/>
</dbReference>
<dbReference type="PANTHER" id="PTHR12592">
    <property type="entry name" value="ATP-DEPENDENT (S)-NAD(P)H-HYDRATE DEHYDRATASE FAMILY MEMBER"/>
    <property type="match status" value="1"/>
</dbReference>
<dbReference type="Pfam" id="PF01256">
    <property type="entry name" value="Carb_kinase"/>
    <property type="match status" value="1"/>
</dbReference>
<dbReference type="Pfam" id="PF03853">
    <property type="entry name" value="YjeF_N"/>
    <property type="match status" value="1"/>
</dbReference>
<dbReference type="PIRSF" id="PIRSF017184">
    <property type="entry name" value="Nnr"/>
    <property type="match status" value="1"/>
</dbReference>
<dbReference type="SUPFAM" id="SSF53613">
    <property type="entry name" value="Ribokinase-like"/>
    <property type="match status" value="1"/>
</dbReference>
<dbReference type="SUPFAM" id="SSF64153">
    <property type="entry name" value="YjeF N-terminal domain-like"/>
    <property type="match status" value="1"/>
</dbReference>
<dbReference type="PROSITE" id="PS01050">
    <property type="entry name" value="YJEF_C_2"/>
    <property type="match status" value="1"/>
</dbReference>
<dbReference type="PROSITE" id="PS51383">
    <property type="entry name" value="YJEF_C_3"/>
    <property type="match status" value="1"/>
</dbReference>
<dbReference type="PROSITE" id="PS51385">
    <property type="entry name" value="YJEF_N"/>
    <property type="match status" value="1"/>
</dbReference>